<gene>
    <name type="primary">JBP1</name>
</gene>
<organism>
    <name type="scientific">Leishmania tarentolae</name>
    <name type="common">Sauroleishmania tarentolae</name>
    <dbReference type="NCBI Taxonomy" id="5689"/>
    <lineage>
        <taxon>Eukaryota</taxon>
        <taxon>Discoba</taxon>
        <taxon>Euglenozoa</taxon>
        <taxon>Kinetoplastea</taxon>
        <taxon>Metakinetoplastina</taxon>
        <taxon>Trypanosomatida</taxon>
        <taxon>Trypanosomatidae</taxon>
        <taxon>Leishmaniinae</taxon>
        <taxon>Leishmania</taxon>
        <taxon>lizard Leishmania</taxon>
    </lineage>
</organism>
<feature type="chain" id="PRO_0000377554" description="Thymine dioxygenase JBP1">
    <location>
        <begin position="1"/>
        <end position="827"/>
    </location>
</feature>
<feature type="region of interest" description="Thymine dioxygenase" evidence="3">
    <location>
        <begin position="62"/>
        <end position="264"/>
    </location>
</feature>
<feature type="region of interest" description="Disordered" evidence="2">
    <location>
        <begin position="364"/>
        <end position="383"/>
    </location>
</feature>
<feature type="region of interest" description="DNA-binding JBP1 domain" evidence="3">
    <location>
        <begin position="392"/>
        <end position="561"/>
    </location>
</feature>
<feature type="region of interest" description="Disordered" evidence="2">
    <location>
        <begin position="539"/>
        <end position="568"/>
    </location>
</feature>
<feature type="compositionally biased region" description="Basic and acidic residues" evidence="2">
    <location>
        <begin position="539"/>
        <end position="557"/>
    </location>
</feature>
<feature type="binding site" evidence="6">
    <location>
        <position position="189"/>
    </location>
    <ligand>
        <name>Fe cation</name>
        <dbReference type="ChEBI" id="CHEBI:24875"/>
        <note>catalytic</note>
    </ligand>
</feature>
<feature type="binding site" evidence="6">
    <location>
        <position position="191"/>
    </location>
    <ligand>
        <name>Fe cation</name>
        <dbReference type="ChEBI" id="CHEBI:24875"/>
        <note>catalytic</note>
    </ligand>
</feature>
<feature type="binding site" evidence="6">
    <location>
        <position position="239"/>
    </location>
    <ligand>
        <name>Fe cation</name>
        <dbReference type="ChEBI" id="CHEBI:24875"/>
        <note>catalytic</note>
    </ligand>
</feature>
<feature type="binding site" evidence="6">
    <location>
        <position position="255"/>
    </location>
    <ligand>
        <name>2-oxoglutarate</name>
        <dbReference type="ChEBI" id="CHEBI:16810"/>
    </ligand>
</feature>
<feature type="site" description="Involved in J base recognition and binding, conferring specificity towards J-DNA">
    <location>
        <position position="525"/>
    </location>
</feature>
<feature type="mutagenesis site" description="Impairs DNA base J biosynthesis." evidence="3">
    <original>H</original>
    <variation>A</variation>
    <location>
        <position position="189"/>
    </location>
</feature>
<feature type="mutagenesis site" description="Impairs DNA base J biosynthesis." evidence="3">
    <original>D</original>
    <variation>A</variation>
    <location>
        <position position="191"/>
    </location>
</feature>
<feature type="mutagenesis site" description="Impairs DNA base J biosynthesis." evidence="3">
    <original>H</original>
    <variation>A</variation>
    <location>
        <position position="239"/>
    </location>
</feature>
<feature type="mutagenesis site" description="Impairs DNA base J biosynthesis." evidence="3">
    <original>R</original>
    <variation>A</variation>
    <location>
        <position position="255"/>
    </location>
</feature>
<feature type="mutagenesis site" description="No effect." evidence="3">
    <original>V</original>
    <variation>A</variation>
    <location>
        <position position="259"/>
    </location>
</feature>
<feature type="mutagenesis site" description="No effect." evidence="4">
    <original>E</original>
    <variation>A</variation>
    <location>
        <position position="391"/>
    </location>
</feature>
<feature type="mutagenesis site" description="No effect." evidence="4">
    <original>K</original>
    <variation>A</variation>
    <location>
        <position position="436"/>
    </location>
</feature>
<feature type="mutagenesis site" description="No effect." evidence="4">
    <original>D</original>
    <variation>A</variation>
    <location>
        <position position="465"/>
    </location>
</feature>
<feature type="mutagenesis site" description="No effect." evidence="4">
    <original>E</original>
    <variation>A</variation>
    <location>
        <position position="468"/>
    </location>
</feature>
<feature type="mutagenesis site" description="No effect." evidence="4">
    <original>EE</original>
    <variation>AA</variation>
    <location>
        <begin position="487"/>
        <end position="488"/>
    </location>
</feature>
<feature type="mutagenesis site" description="Decreases binding affinity for both J-DNA and normal DNA." evidence="4">
    <original>K</original>
    <variation>A</variation>
    <location>
        <position position="518"/>
    </location>
</feature>
<feature type="mutagenesis site" description="Decreases binding affinity for both J-DNA and normal DNA." evidence="4">
    <original>K</original>
    <variation>A</variation>
    <location>
        <position position="522"/>
    </location>
</feature>
<feature type="mutagenesis site" description="Slightly decreases binding affinity for both J-DNA and normal DNA." evidence="4">
    <original>K</original>
    <variation>A</variation>
    <location>
        <position position="524"/>
    </location>
</feature>
<feature type="mutagenesis site" description="Abolishes preference for J-DNA-binding." evidence="4">
    <original>D</original>
    <variation>A</variation>
    <location>
        <position position="525"/>
    </location>
</feature>
<feature type="mutagenesis site" description="Decreases binding affinity for both J-DNA and normal DNA." evidence="4">
    <original>R</original>
    <variation>A</variation>
    <location>
        <position position="532"/>
    </location>
</feature>
<feature type="mutagenesis site" description="No effect." evidence="4">
    <original>K</original>
    <variation>A</variation>
    <location>
        <position position="535"/>
    </location>
</feature>
<feature type="mutagenesis site" description="No effect." evidence="4">
    <original>D</original>
    <variation>A</variation>
    <location>
        <position position="536"/>
    </location>
</feature>
<feature type="mutagenesis site" description="No effect." evidence="4">
    <original>EE</original>
    <variation>AA</variation>
    <location>
        <begin position="540"/>
        <end position="541"/>
    </location>
</feature>
<feature type="mutagenesis site" description="No effect." evidence="4">
    <original>E</original>
    <variation>A</variation>
    <location>
        <position position="553"/>
    </location>
</feature>
<feature type="helix" evidence="7">
    <location>
        <begin position="396"/>
        <end position="401"/>
    </location>
</feature>
<feature type="helix" evidence="7">
    <location>
        <begin position="402"/>
        <end position="406"/>
    </location>
</feature>
<feature type="helix" evidence="7">
    <location>
        <begin position="408"/>
        <end position="411"/>
    </location>
</feature>
<feature type="turn" evidence="7">
    <location>
        <begin position="412"/>
        <end position="414"/>
    </location>
</feature>
<feature type="helix" evidence="7">
    <location>
        <begin position="417"/>
        <end position="444"/>
    </location>
</feature>
<feature type="strand" evidence="7">
    <location>
        <begin position="455"/>
        <end position="457"/>
    </location>
</feature>
<feature type="helix" evidence="7">
    <location>
        <begin position="458"/>
        <end position="478"/>
    </location>
</feature>
<feature type="helix" evidence="7">
    <location>
        <begin position="485"/>
        <end position="505"/>
    </location>
</feature>
<feature type="turn" evidence="7">
    <location>
        <begin position="511"/>
        <end position="514"/>
    </location>
</feature>
<feature type="helix" evidence="7">
    <location>
        <begin position="516"/>
        <end position="527"/>
    </location>
</feature>
<feature type="helix" evidence="8">
    <location>
        <begin position="530"/>
        <end position="533"/>
    </location>
</feature>
<feature type="strand" evidence="8">
    <location>
        <begin position="534"/>
        <end position="536"/>
    </location>
</feature>
<feature type="helix" evidence="7">
    <location>
        <begin position="539"/>
        <end position="556"/>
    </location>
</feature>
<feature type="turn" evidence="7">
    <location>
        <begin position="557"/>
        <end position="559"/>
    </location>
</feature>
<keyword id="KW-0002">3D-structure</keyword>
<keyword id="KW-0223">Dioxygenase</keyword>
<keyword id="KW-0238">DNA-binding</keyword>
<keyword id="KW-0408">Iron</keyword>
<keyword id="KW-0479">Metal-binding</keyword>
<keyword id="KW-0539">Nucleus</keyword>
<keyword id="KW-0560">Oxidoreductase</keyword>
<dbReference type="EC" id="1.14.11.6" evidence="3"/>
<dbReference type="EMBL" id="AF182401">
    <property type="protein sequence ID" value="AAF01743.1"/>
    <property type="molecule type" value="Genomic_DNA"/>
</dbReference>
<dbReference type="EMBL" id="AY842844">
    <property type="protein sequence ID" value="AAX81332.1"/>
    <property type="molecule type" value="Genomic_DNA"/>
</dbReference>
<dbReference type="PDB" id="2XSE">
    <property type="method" value="X-ray"/>
    <property type="resolution" value="1.90 A"/>
    <property type="chains" value="A=392-561"/>
</dbReference>
<dbReference type="PDB" id="8BBM">
    <property type="method" value="X-ray"/>
    <property type="resolution" value="1.95 A"/>
    <property type="chains" value="A=392-561"/>
</dbReference>
<dbReference type="PDBsum" id="2XSE"/>
<dbReference type="PDBsum" id="8BBM"/>
<dbReference type="SASBDB" id="Q9U6M1"/>
<dbReference type="SMR" id="Q9U6M1"/>
<dbReference type="ABCD" id="Q9U6M1">
    <property type="antibodies" value="1 sequenced antibody"/>
</dbReference>
<dbReference type="VEuPathDB" id="TriTrypDB:LtaPh_1400300"/>
<dbReference type="PhylomeDB" id="Q9U6M1"/>
<dbReference type="EvolutionaryTrace" id="Q9U6M1"/>
<dbReference type="GO" id="GO:0005634">
    <property type="term" value="C:nucleus"/>
    <property type="evidence" value="ECO:0000314"/>
    <property type="project" value="UniProtKB"/>
</dbReference>
<dbReference type="GO" id="GO:0003677">
    <property type="term" value="F:DNA binding"/>
    <property type="evidence" value="ECO:0000314"/>
    <property type="project" value="UniProtKB"/>
</dbReference>
<dbReference type="GO" id="GO:0046872">
    <property type="term" value="F:metal ion binding"/>
    <property type="evidence" value="ECO:0007669"/>
    <property type="project" value="UniProtKB-KW"/>
</dbReference>
<dbReference type="GO" id="GO:0050341">
    <property type="term" value="F:thymine dioxygenase activity"/>
    <property type="evidence" value="ECO:0000304"/>
    <property type="project" value="UniProtKB"/>
</dbReference>
<dbReference type="GO" id="GO:0070580">
    <property type="term" value="P:base J metabolic process"/>
    <property type="evidence" value="ECO:0000315"/>
    <property type="project" value="UniProtKB"/>
</dbReference>
<dbReference type="CDD" id="cd20332">
    <property type="entry name" value="JBP"/>
    <property type="match status" value="1"/>
</dbReference>
<dbReference type="FunFam" id="1.20.120.1440:FF:000001">
    <property type="entry name" value="Thymine dioxygenase JBP1"/>
    <property type="match status" value="1"/>
</dbReference>
<dbReference type="FunFam" id="3.60.130.30:FF:000002">
    <property type="entry name" value="Thymine dioxygenase JBP1"/>
    <property type="match status" value="1"/>
</dbReference>
<dbReference type="Gene3D" id="3.60.130.30">
    <property type="match status" value="1"/>
</dbReference>
<dbReference type="Gene3D" id="1.20.120.1440">
    <property type="entry name" value="JBP1, DNA-binding domain"/>
    <property type="match status" value="1"/>
</dbReference>
<dbReference type="InterPro" id="IPR024779">
    <property type="entry name" value="2OGFeDO_JBP1/TET_oxygenase_dom"/>
</dbReference>
<dbReference type="InterPro" id="IPR041241">
    <property type="entry name" value="DB_JBP1"/>
</dbReference>
<dbReference type="InterPro" id="IPR043111">
    <property type="entry name" value="DB_JBP1_sf"/>
</dbReference>
<dbReference type="Pfam" id="PF18526">
    <property type="entry name" value="DB_JBP1"/>
    <property type="match status" value="1"/>
</dbReference>
<dbReference type="Pfam" id="PF12851">
    <property type="entry name" value="Tet_JBP"/>
    <property type="match status" value="1"/>
</dbReference>
<proteinExistence type="evidence at protein level"/>
<reference key="1">
    <citation type="journal article" date="1999" name="EMBO J.">
        <title>The modified base J is the target for a novel DNA-binding protein in kinetoplastid protozoans.</title>
        <authorList>
            <person name="Cross M."/>
            <person name="Kieft R."/>
            <person name="Sabatini R."/>
            <person name="Wilm M."/>
            <person name="de Kort M."/>
            <person name="van der Marel G.A."/>
            <person name="van Boom J.H."/>
            <person name="van Leeuwen F."/>
            <person name="Borst P."/>
        </authorList>
    </citation>
    <scope>NUCLEOTIDE SEQUENCE [GENOMIC DNA]</scope>
    <scope>DNA-BINDING</scope>
    <source>
        <strain>tarIVa</strain>
    </source>
</reference>
<reference key="2">
    <citation type="journal article" date="2005" name="Nucleic Acids Res.">
        <title>Formation of linear inverted repeat amplicons following targeting of an essential gene in Leishmania.</title>
        <authorList>
            <person name="Genest P.-A."/>
            <person name="ter Riet B."/>
            <person name="Dumas C."/>
            <person name="Papadopoulou B."/>
            <person name="van Luenen H.G.A.M."/>
            <person name="Borst P."/>
        </authorList>
    </citation>
    <scope>NUCLEOTIDE SEQUENCE [GENOMIC DNA]</scope>
    <source>
        <strain>TarII</strain>
    </source>
</reference>
<reference key="3">
    <citation type="journal article" date="2007" name="Nucleic Acids Res.">
        <title>The protein that binds to DNA base J in trypanosomatids has features of a thymidine hydroxylase.</title>
        <authorList>
            <person name="Yu Z."/>
            <person name="Genest P.-A."/>
            <person name="ter Riet B."/>
            <person name="Sweeney K."/>
            <person name="DiPaolo C."/>
            <person name="Kieft R."/>
            <person name="Christodoulou E."/>
            <person name="Perrakis A."/>
            <person name="Simmons J.M."/>
            <person name="Hausinger R.P."/>
            <person name="van Luenen H.G.A.M."/>
            <person name="Rigden D.J."/>
            <person name="Sabatini R."/>
            <person name="Borst P."/>
        </authorList>
    </citation>
    <scope>FUNCTION</scope>
    <scope>SUBCELLULAR LOCATION</scope>
    <scope>MUTAGENESIS OF HIS-189; ASP-191; HIS-239; ARG-255 AND VAL-259</scope>
</reference>
<reference key="4">
    <citation type="journal article" date="2011" name="Nucleic Acids Res.">
        <title>The structural basis for recognition of base J containing DNA by a novel DNA binding domain in JBP1.</title>
        <authorList>
            <person name="Heidebrecht T."/>
            <person name="Christodoulou E."/>
            <person name="Chalmers M.J."/>
            <person name="Jan S."/>
            <person name="Ter Riet B."/>
            <person name="Grover R.K."/>
            <person name="Joosten R.P."/>
            <person name="Littler D."/>
            <person name="van Luenen H."/>
            <person name="Griffin P.R."/>
            <person name="Wentworth P. Jr."/>
            <person name="Borst P."/>
            <person name="Perrakis A."/>
        </authorList>
    </citation>
    <scope>X-RAY CRYSTALLOGRAPHY (1.9 ANGSTROMS) OF 392-561</scope>
    <scope>DNA-BINDING</scope>
    <scope>MUTAGENESIS OF GLU-391; LYS-436; ASP-465; GLU-468; 487-GLU-GLU-488; LYS-518; LYS-522; LYS-524; ASP-525; ARG-532; LYS-535; ASP-536; 540-GLU-GLU-541 AND GLU-553</scope>
    <scope>SUBUNIT</scope>
    <scope>SUBCELLULAR LOCATION</scope>
</reference>
<name>JBP1_LEITA</name>
<accession>Q9U6M1</accession>
<protein>
    <recommendedName>
        <fullName>Thymine dioxygenase JBP1</fullName>
        <ecNumber evidence="3">1.14.11.6</ecNumber>
    </recommendedName>
    <alternativeName>
        <fullName>J-binding protein 1</fullName>
    </alternativeName>
    <alternativeName>
        <fullName>Thymidine hydroxylase JBP1</fullName>
    </alternativeName>
</protein>
<evidence type="ECO:0000250" key="1">
    <source>
        <dbReference type="UniProtKB" id="Q6N021"/>
    </source>
</evidence>
<evidence type="ECO:0000256" key="2">
    <source>
        <dbReference type="SAM" id="MobiDB-lite"/>
    </source>
</evidence>
<evidence type="ECO:0000269" key="3">
    <source>
    </source>
</evidence>
<evidence type="ECO:0000269" key="4">
    <source>
    </source>
</evidence>
<evidence type="ECO:0000305" key="5"/>
<evidence type="ECO:0000305" key="6">
    <source>
    </source>
</evidence>
<evidence type="ECO:0007829" key="7">
    <source>
        <dbReference type="PDB" id="2XSE"/>
    </source>
</evidence>
<evidence type="ECO:0007829" key="8">
    <source>
        <dbReference type="PDB" id="8BBM"/>
    </source>
</evidence>
<sequence length="827" mass="93403">MEPDSKKVKLDIFNFPTTRETRTPEEVAESYAEAVKSHPFYDNVHSVVDFYDSGTIKDGRGQIIGVVLREALPKYAASMASELLTSAAVRTSLRSMMFGGEPPLSGIAGYFDYRGSPVELKSRKTSFTYEHEAAWPAVFPVVDYVSEIYRHVAPERWKAQNDAIPDLVRIHGTPFSTLTINSRFRTASHTDVGDFDAGYSCIACLDGQFKGLALSFDDFGINVLLQPRDVMIFDSHHFHSNTEVELSFSGEDWKRLTCVFYYRAALGEPASYAEYQRRLEKSKTDTRFTPVVHHVRVKENGTSVNRPSPVYPISQSPFWVPMVAHCLQHCASAAQCVHEAMTADGSRLAEMMFGESLSTSDGIPLRGEDEKVKANGDSTPRPLSRLGGFSETNLMVSTAVEKKKYLDSEFLLHCISAQLLDMWKQARARWLELVGKEWAHMLALNPERKDFLWKNQSEMNSAFFDLCEVGKQVMLGLLGKEVALPKEEQAFWIMYAVHLSAACAEELHMPEVAMSLRKLNVKLKDFNFGGTRYFKDMPPEEKKRRMERKQRIEEARRHGMPSGSHEKRANWLTNDSFDYQTEDCVIDYAQHKWVLPALHAKEVTKTVRTGELPTTERVVRVLVVIPDPQSKLENVDCKLEVPDMVGSSSEWERLMSSPAVHRVLSAAQRNLQLPDSVTHGNVQTHFAFHSTLPTDIYDFVVLQHVLSRIPDDAQASAYIRRAAALCSGCLFVVETDVQCRQYYTLKYSIRCSYDTVAPLFFQQLHRVCYGTKTARVRTKGELESLIPTVCCARYKLQGSPLNTTVHVVSPFPSCEVQNLSSALCDRA</sequence>
<comment type="function">
    <text evidence="3">Dioxygenase that catalyzes the first step of DNA base J (beta-d-glucosyl-HOMedU) biosynthesis by converting thymine to 5-hydroxymethyluracil (HOMedU). DNA base J is a hypermodified thymidine residue found in the genome of kinetoplastid parasites, which is localized primarily to repetitive DNA, namely the telomeres, and is implicated in the regulation of antigenic variation. Also specifically binds to base J-containing DNA (J-DNA). Involved in propagation and maintenance of DNA base J synthesis initiated by JBP2 by specifically binding already synthesized DNA base J and propagating J synthesis. Thymine dioxygenase activity and J-DNA-binding are independent functions.</text>
</comment>
<comment type="catalytic activity">
    <reaction evidence="3">
        <text>thymine + 2-oxoglutarate + O2 = 5-hydroxymethyluracil + succinate + CO2</text>
        <dbReference type="Rhea" id="RHEA:10316"/>
        <dbReference type="ChEBI" id="CHEBI:15379"/>
        <dbReference type="ChEBI" id="CHEBI:16526"/>
        <dbReference type="ChEBI" id="CHEBI:16810"/>
        <dbReference type="ChEBI" id="CHEBI:16964"/>
        <dbReference type="ChEBI" id="CHEBI:17821"/>
        <dbReference type="ChEBI" id="CHEBI:30031"/>
        <dbReference type="EC" id="1.14.11.6"/>
    </reaction>
</comment>
<comment type="cofactor">
    <cofactor evidence="1">
        <name>Fe(2+)</name>
        <dbReference type="ChEBI" id="CHEBI:29033"/>
    </cofactor>
    <text evidence="1">Binds 1 Fe(2+) ion per subunit.</text>
</comment>
<comment type="subunit">
    <text evidence="4">Monomer. Binds to DNA as a monomer.</text>
</comment>
<comment type="subcellular location">
    <subcellularLocation>
        <location evidence="3 4">Nucleus</location>
    </subcellularLocation>
    <text>Localizes to discrete spots in the nucleus, probably the J-rich telomeres.</text>
</comment>
<comment type="domain">
    <text>The DNA-binding JBP1 domain (DB-JBP1) is necessary and sufficient for binding to J-DNA.</text>
</comment>
<comment type="similarity">
    <text evidence="5">Belongs to the TET family. JBP1 subfamily.</text>
</comment>